<feature type="chain" id="PRO_0000457081" description="Arginase">
    <location>
        <begin position="1"/>
        <end position="411"/>
    </location>
</feature>
<feature type="region of interest" description="Disordered" evidence="3">
    <location>
        <begin position="83"/>
        <end position="106"/>
    </location>
</feature>
<feature type="binding site" evidence="6 7 18 19 20">
    <location>
        <position position="193"/>
    </location>
    <ligand>
        <name>Mn(2+)</name>
        <dbReference type="ChEBI" id="CHEBI:29035"/>
        <label>1</label>
    </ligand>
</feature>
<feature type="binding site" evidence="6 7 18 19 20">
    <location>
        <position position="216"/>
    </location>
    <ligand>
        <name>Mn(2+)</name>
        <dbReference type="ChEBI" id="CHEBI:29035"/>
        <label>1</label>
    </ligand>
</feature>
<feature type="binding site" evidence="6 7 18 19 20">
    <location>
        <position position="216"/>
    </location>
    <ligand>
        <name>Mn(2+)</name>
        <dbReference type="ChEBI" id="CHEBI:29035"/>
        <label>2</label>
    </ligand>
</feature>
<feature type="binding site" evidence="6 7 18 19 20">
    <location>
        <position position="218"/>
    </location>
    <ligand>
        <name>Mn(2+)</name>
        <dbReference type="ChEBI" id="CHEBI:29035"/>
        <label>2</label>
    </ligand>
</feature>
<feature type="binding site" evidence="6 7 18 19 20">
    <location>
        <position position="220"/>
    </location>
    <ligand>
        <name>Mn(2+)</name>
        <dbReference type="ChEBI" id="CHEBI:29035"/>
        <label>1</label>
    </ligand>
</feature>
<feature type="binding site" evidence="13 14 18 19 20">
    <location>
        <position position="222"/>
    </location>
    <ligand>
        <name>L-arginine</name>
        <dbReference type="ChEBI" id="CHEBI:32682"/>
    </ligand>
</feature>
<feature type="binding site" evidence="13 14 18 19 20">
    <location>
        <position position="229"/>
    </location>
    <ligand>
        <name>L-arginine</name>
        <dbReference type="ChEBI" id="CHEBI:32682"/>
    </ligand>
</feature>
<feature type="binding site" evidence="13 14 18 19 20">
    <location>
        <position position="274"/>
    </location>
    <ligand>
        <name>L-arginine</name>
        <dbReference type="ChEBI" id="CHEBI:32682"/>
    </ligand>
</feature>
<feature type="binding site" evidence="6 7 18 19 20">
    <location>
        <position position="323"/>
    </location>
    <ligand>
        <name>Mn(2+)</name>
        <dbReference type="ChEBI" id="CHEBI:29035"/>
        <label>1</label>
    </ligand>
</feature>
<feature type="binding site" evidence="6 7 18 19 20">
    <location>
        <position position="323"/>
    </location>
    <ligand>
        <name>Mn(2+)</name>
        <dbReference type="ChEBI" id="CHEBI:29035"/>
        <label>2</label>
    </ligand>
</feature>
<feature type="binding site" evidence="6 7 18 19 20">
    <location>
        <position position="325"/>
    </location>
    <ligand>
        <name>Mn(2+)</name>
        <dbReference type="ChEBI" id="CHEBI:29035"/>
        <label>2</label>
    </ligand>
</feature>
<feature type="mutagenesis site" description="Loss of catalytic activity. No defect in oligomerization." evidence="4">
    <original>H</original>
    <variation>A</variation>
    <location>
        <position position="193"/>
    </location>
</feature>
<feature type="mutagenesis site" description="Loss of catalytic activity. Loss of oligomerization." evidence="4">
    <original>D</original>
    <variation>A</variation>
    <location>
        <position position="216"/>
    </location>
</feature>
<feature type="mutagenesis site" description="Loss of catalytic activity. Loss of oligomerization." evidence="4">
    <original>H</original>
    <variation>A</variation>
    <location>
        <position position="218"/>
    </location>
</feature>
<feature type="mutagenesis site" description="Loss of catalytic activity. Loss of oligomerization." evidence="4">
    <original>D</original>
    <variation>A</variation>
    <location>
        <position position="220"/>
    </location>
</feature>
<feature type="mutagenesis site" description="Loss of catalytic activity. Loss of oligomerization." evidence="4">
    <original>H</original>
    <variation>A</variation>
    <location>
        <position position="233"/>
    </location>
</feature>
<feature type="mutagenesis site" description="Severe loss of catalytic activity. Oligomerization is partially reduced." evidence="5">
    <original>E</original>
    <variation>A</variation>
    <location>
        <position position="295"/>
    </location>
</feature>
<feature type="mutagenesis site" description="11-fold reduction in affinity for L-arginine. Loss of oligomerization." evidence="5">
    <original>E</original>
    <variation>R</variation>
    <location>
        <position position="295"/>
    </location>
</feature>
<feature type="mutagenesis site" description="Loss of catalytic activity and loss of oligomerization; when associated with A-325." evidence="4">
    <original>D</original>
    <variation>A</variation>
    <location>
        <position position="323"/>
    </location>
</feature>
<feature type="mutagenesis site" description="Loss of catalytic activity and loss of oligomerization; when associated with A-323." evidence="4">
    <original>D</original>
    <variation>A</variation>
    <location>
        <position position="325"/>
    </location>
</feature>
<feature type="mutagenesis site" description="Severe loss of catalytic activity. Loss of oligomerization." evidence="4">
    <original>E</original>
    <variation>Q</variation>
    <location>
        <position position="347"/>
    </location>
</feature>
<feature type="mutagenesis site" description="2.5-fold decrease in affinity for L-arginine." evidence="6">
    <original>H</original>
    <variation>A</variation>
    <location>
        <position position="381"/>
    </location>
</feature>
<feature type="mutagenesis site" description="3.4-fold reduction in affinity for L-arginine. Loss of oligomerization." evidence="5">
    <original>R</original>
    <variation>A</variation>
    <location>
        <position position="404"/>
    </location>
</feature>
<feature type="sequence conflict" description="In Ref. 1; CAC86388." evidence="11" ref="1">
    <original>N</original>
    <variation>K</variation>
    <location>
        <position position="256"/>
    </location>
</feature>
<feature type="strand" evidence="21">
    <location>
        <begin position="23"/>
        <end position="29"/>
    </location>
</feature>
<feature type="helix" evidence="21">
    <location>
        <begin position="40"/>
        <end position="42"/>
    </location>
</feature>
<feature type="helix" evidence="21">
    <location>
        <begin position="43"/>
        <end position="50"/>
    </location>
</feature>
<feature type="helix" evidence="21">
    <location>
        <begin position="52"/>
        <end position="58"/>
    </location>
</feature>
<feature type="strand" evidence="21">
    <location>
        <begin position="62"/>
        <end position="68"/>
    </location>
</feature>
<feature type="helix" evidence="21">
    <location>
        <begin position="162"/>
        <end position="180"/>
    </location>
</feature>
<feature type="turn" evidence="21">
    <location>
        <begin position="181"/>
        <end position="183"/>
    </location>
</feature>
<feature type="strand" evidence="21">
    <location>
        <begin position="185"/>
        <end position="192"/>
    </location>
</feature>
<feature type="helix" evidence="21">
    <location>
        <begin position="193"/>
        <end position="195"/>
    </location>
</feature>
<feature type="helix" evidence="21">
    <location>
        <begin position="196"/>
        <end position="206"/>
    </location>
</feature>
<feature type="strand" evidence="21">
    <location>
        <begin position="211"/>
        <end position="215"/>
    </location>
</feature>
<feature type="turn" evidence="21">
    <location>
        <begin position="224"/>
        <end position="226"/>
    </location>
</feature>
<feature type="helix" evidence="21">
    <location>
        <begin position="232"/>
        <end position="234"/>
    </location>
</feature>
<feature type="helix" evidence="21">
    <location>
        <begin position="236"/>
        <end position="240"/>
    </location>
</feature>
<feature type="helix" evidence="21">
    <location>
        <begin position="252"/>
        <end position="254"/>
    </location>
</feature>
<feature type="helix" evidence="21">
    <location>
        <begin position="262"/>
        <end position="264"/>
    </location>
</feature>
<feature type="strand" evidence="21">
    <location>
        <begin position="265"/>
        <end position="270"/>
    </location>
</feature>
<feature type="helix" evidence="21">
    <location>
        <begin position="275"/>
        <end position="283"/>
    </location>
</feature>
<feature type="strand" evidence="21">
    <location>
        <begin position="287"/>
        <end position="290"/>
    </location>
</feature>
<feature type="helix" evidence="21">
    <location>
        <begin position="291"/>
        <end position="310"/>
    </location>
</feature>
<feature type="strand" evidence="21">
    <location>
        <begin position="318"/>
        <end position="323"/>
    </location>
</feature>
<feature type="helix" evidence="21">
    <location>
        <begin position="324"/>
        <end position="326"/>
    </location>
</feature>
<feature type="turn" evidence="21">
    <location>
        <begin position="329"/>
        <end position="331"/>
    </location>
</feature>
<feature type="strand" evidence="21">
    <location>
        <begin position="335"/>
        <end position="337"/>
    </location>
</feature>
<feature type="helix" evidence="21">
    <location>
        <begin position="345"/>
        <end position="358"/>
    </location>
</feature>
<feature type="strand" evidence="21">
    <location>
        <begin position="361"/>
        <end position="367"/>
    </location>
</feature>
<feature type="helix" evidence="21">
    <location>
        <begin position="371"/>
        <end position="373"/>
    </location>
</feature>
<feature type="helix" evidence="21">
    <location>
        <begin position="393"/>
        <end position="405"/>
    </location>
</feature>
<keyword id="KW-0002">3D-structure</keyword>
<keyword id="KW-0056">Arginine metabolism</keyword>
<keyword id="KW-0378">Hydrolase</keyword>
<keyword id="KW-0464">Manganese</keyword>
<keyword id="KW-0479">Metal-binding</keyword>
<keyword id="KW-1185">Reference proteome</keyword>
<accession>Q8I384</accession>
<accession>Q8WPZ7</accession>
<evidence type="ECO:0000250" key="1">
    <source>
        <dbReference type="UniProtKB" id="A0A509AF89"/>
    </source>
</evidence>
<evidence type="ECO:0000255" key="2">
    <source>
        <dbReference type="PROSITE-ProRule" id="PRU00742"/>
    </source>
</evidence>
<evidence type="ECO:0000256" key="3">
    <source>
        <dbReference type="SAM" id="MobiDB-lite"/>
    </source>
</evidence>
<evidence type="ECO:0000269" key="4">
    <source>
    </source>
</evidence>
<evidence type="ECO:0000269" key="5">
    <source>
    </source>
</evidence>
<evidence type="ECO:0000269" key="6">
    <source>
    </source>
</evidence>
<evidence type="ECO:0000269" key="7">
    <source>
    </source>
</evidence>
<evidence type="ECO:0000303" key="8">
    <source>
    </source>
</evidence>
<evidence type="ECO:0000303" key="9">
    <source>
    </source>
</evidence>
<evidence type="ECO:0000303" key="10">
    <source>
    </source>
</evidence>
<evidence type="ECO:0000305" key="11"/>
<evidence type="ECO:0000305" key="12">
    <source>
    </source>
</evidence>
<evidence type="ECO:0000305" key="13">
    <source>
    </source>
</evidence>
<evidence type="ECO:0000305" key="14">
    <source>
    </source>
</evidence>
<evidence type="ECO:0000312" key="15">
    <source>
        <dbReference type="EMBL" id="CAC86388.1"/>
    </source>
</evidence>
<evidence type="ECO:0000312" key="16">
    <source>
        <dbReference type="EMBL" id="CAD51750.1"/>
    </source>
</evidence>
<evidence type="ECO:0000312" key="17">
    <source>
        <dbReference type="Proteomes" id="UP000001450"/>
    </source>
</evidence>
<evidence type="ECO:0007744" key="18">
    <source>
        <dbReference type="PDB" id="3MMR"/>
    </source>
</evidence>
<evidence type="ECO:0007744" key="19">
    <source>
        <dbReference type="PDB" id="3SL0"/>
    </source>
</evidence>
<evidence type="ECO:0007744" key="20">
    <source>
        <dbReference type="PDB" id="3SL1"/>
    </source>
</evidence>
<evidence type="ECO:0007829" key="21">
    <source>
        <dbReference type="PDB" id="3SL1"/>
    </source>
</evidence>
<proteinExistence type="evidence at protein level"/>
<comment type="function">
    <text evidence="1 4 5 6 7">Catalyzes the hydrolysis of L-arginine into urea and L-ornithine, which is a precursor for polyamine biosynthesis (PubMed:15843155, PubMed:19456858, PubMed:20527960, PubMed:21728378). May play a role in parasite intra-hepatic development during the host liver stage (By similarity).</text>
</comment>
<comment type="catalytic activity">
    <reaction evidence="4 5 6 7">
        <text>L-arginine + H2O = urea + L-ornithine</text>
        <dbReference type="Rhea" id="RHEA:20569"/>
        <dbReference type="ChEBI" id="CHEBI:15377"/>
        <dbReference type="ChEBI" id="CHEBI:16199"/>
        <dbReference type="ChEBI" id="CHEBI:32682"/>
        <dbReference type="ChEBI" id="CHEBI:46911"/>
        <dbReference type="EC" id="3.5.3.1"/>
    </reaction>
</comment>
<comment type="cofactor">
    <cofactor evidence="4 5">
        <name>Mn(2+)</name>
        <dbReference type="ChEBI" id="CHEBI:29035"/>
    </cofactor>
    <text evidence="6 7">Binds 2 manganese ions per subunit.</text>
</comment>
<comment type="activity regulation">
    <text evidence="4 6 7">Feedback inhibition by product L-ornithine, (PubMed:15843155). Inhibited by 2(S)-amino-6-boronohexanoic acid (ABH); however, with less efficiency than human ARG1 (PubMed:20527960, PubMed:21728378).</text>
</comment>
<comment type="biophysicochemical properties">
    <kinetics>
        <KM evidence="4">3 mM for L-arginine (at pH 8 and 37 degrees Celsius)</KM>
        <KM evidence="6">3.3 mM for L-arginine (at pH 8.5 and 37 degrees Celsius)</KM>
        <KM evidence="6">4 mM for L-arginine (at pH 8 and 37 degrees Celsius)</KM>
        <KM evidence="6">25 mM for L-arginine (at pH 7.4 and 37 degrees Celsius)</KM>
        <Vmax evidence="4">31.0 umol/min/mg enzyme (at pH 8 and 37 degrees Celsius)</Vmax>
        <text evidence="4 6">kcat is 440 sec(-1) with L-arginine as substrate (at pH 8.5 and 37 degrees Celsius) (PubMed:20527960). kcat is 96 sec(-1) with L-arginine as substrate (at pH 8 and 37 degrees Celsius) (PubMed:15843155). kcat is 320 sec(-1) with L-arginine as substrate (at pH 8 and 37 degrees Celsius) (PubMed:20527960). kcat is 77 sec(-1) with L-arginine as substrate (at pH 7.4 and 37 degrees Celsius) (PubMed:20527960).</text>
    </kinetics>
    <phDependence>
        <text evidence="4">Optimum pH is 8.5-9.</text>
    </phDependence>
    <temperatureDependence>
        <text evidence="4">Stable up to 57 degrees Celsius.</text>
    </temperatureDependence>
</comment>
<comment type="pathway">
    <text evidence="12 13">Nitrogen metabolism; urea cycle; L-ornithine and urea from L-arginine: step 1/1.</text>
</comment>
<comment type="subunit">
    <text evidence="4 5">Homotrimer; oligomerization is dependent on Mn(2+) binding.</text>
</comment>
<comment type="developmental stage">
    <text evidence="4">Expressed during the asexual blood stage; expression is high in rings and young trophozoites, and low in mature trophozoites and schizonts.</text>
</comment>
<comment type="similarity">
    <text evidence="2">Belongs to the arginase family.</text>
</comment>
<protein>
    <recommendedName>
        <fullName evidence="8">Arginase</fullName>
        <shortName evidence="10">PFA</shortName>
        <shortName evidence="9">PfArg</shortName>
        <ecNumber evidence="4 5 6 7">3.5.3.1</ecNumber>
    </recommendedName>
</protein>
<reference evidence="15" key="1">
    <citation type="journal article" date="2005" name="Biol. Chem.">
        <title>Structural metal dependency of the arginase from the human malaria parasite Plasmodium falciparum.</title>
        <authorList>
            <person name="Muller I.B."/>
            <person name="Walter R.D."/>
            <person name="Wrenger C."/>
        </authorList>
    </citation>
    <scope>NUCLEOTIDE SEQUENCE [GENOMIC DNA]</scope>
    <scope>FUNCTION</scope>
    <scope>CATALYTIC ACTIVITY</scope>
    <scope>COFACTOR</scope>
    <scope>ACTIVITY REGULATION</scope>
    <scope>BIOPHYSICOCHEMICAL PROPERTIES</scope>
    <scope>PATHWAY</scope>
    <scope>SUBUNIT</scope>
    <scope>DEVELOPMENTAL STAGE</scope>
    <scope>MUTAGENESIS OF HIS-193; ASP-216; HIS-218; ASP-220; HIS-233; ASP-323; ASP-325 AND GLU-347</scope>
    <source>
        <strain evidence="15">3D7</strain>
    </source>
</reference>
<reference evidence="17" key="2">
    <citation type="journal article" date="2002" name="Nature">
        <title>Genome sequence of the human malaria parasite Plasmodium falciparum.</title>
        <authorList>
            <person name="Gardner M.J."/>
            <person name="Hall N."/>
            <person name="Fung E."/>
            <person name="White O."/>
            <person name="Berriman M."/>
            <person name="Hyman R.W."/>
            <person name="Carlton J.M."/>
            <person name="Pain A."/>
            <person name="Nelson K.E."/>
            <person name="Bowman S."/>
            <person name="Paulsen I.T."/>
            <person name="James K.D."/>
            <person name="Eisen J.A."/>
            <person name="Rutherford K.M."/>
            <person name="Salzberg S.L."/>
            <person name="Craig A."/>
            <person name="Kyes S."/>
            <person name="Chan M.-S."/>
            <person name="Nene V."/>
            <person name="Shallom S.J."/>
            <person name="Suh B."/>
            <person name="Peterson J."/>
            <person name="Angiuoli S."/>
            <person name="Pertea M."/>
            <person name="Allen J."/>
            <person name="Selengut J."/>
            <person name="Haft D."/>
            <person name="Mather M.W."/>
            <person name="Vaidya A.B."/>
            <person name="Martin D.M.A."/>
            <person name="Fairlamb A.H."/>
            <person name="Fraunholz M.J."/>
            <person name="Roos D.S."/>
            <person name="Ralph S.A."/>
            <person name="McFadden G.I."/>
            <person name="Cummings L.M."/>
            <person name="Subramanian G.M."/>
            <person name="Mungall C."/>
            <person name="Venter J.C."/>
            <person name="Carucci D.J."/>
            <person name="Hoffman S.L."/>
            <person name="Newbold C."/>
            <person name="Davis R.W."/>
            <person name="Fraser C.M."/>
            <person name="Barrell B.G."/>
        </authorList>
    </citation>
    <scope>NUCLEOTIDE SEQUENCE [LARGE SCALE GENOMIC DNA]</scope>
    <source>
        <strain evidence="17">3D7</strain>
    </source>
</reference>
<reference evidence="17" key="3">
    <citation type="journal article" date="2002" name="Nature">
        <title>Sequence of Plasmodium falciparum chromosomes 1, 3-9 and 13.</title>
        <authorList>
            <person name="Hall N."/>
            <person name="Pain A."/>
            <person name="Berriman M."/>
            <person name="Churcher C.M."/>
            <person name="Harris B."/>
            <person name="Harris D."/>
            <person name="Mungall K.L."/>
            <person name="Bowman S."/>
            <person name="Atkin R."/>
            <person name="Baker S."/>
            <person name="Barron A."/>
            <person name="Brooks K."/>
            <person name="Buckee C.O."/>
            <person name="Burrows C."/>
            <person name="Cherevach I."/>
            <person name="Chillingworth C."/>
            <person name="Chillingworth T."/>
            <person name="Christodoulou Z."/>
            <person name="Clark L."/>
            <person name="Clark R."/>
            <person name="Corton C."/>
            <person name="Cronin A."/>
            <person name="Davies R.M."/>
            <person name="Davis P."/>
            <person name="Dear P."/>
            <person name="Dearden F."/>
            <person name="Doggett J."/>
            <person name="Feltwell T."/>
            <person name="Goble A."/>
            <person name="Goodhead I."/>
            <person name="Gwilliam R."/>
            <person name="Hamlin N."/>
            <person name="Hance Z."/>
            <person name="Harper D."/>
            <person name="Hauser H."/>
            <person name="Hornsby T."/>
            <person name="Holroyd S."/>
            <person name="Horrocks P."/>
            <person name="Humphray S."/>
            <person name="Jagels K."/>
            <person name="James K.D."/>
            <person name="Johnson D."/>
            <person name="Kerhornou A."/>
            <person name="Knights A."/>
            <person name="Konfortov B."/>
            <person name="Kyes S."/>
            <person name="Larke N."/>
            <person name="Lawson D."/>
            <person name="Lennard N."/>
            <person name="Line A."/>
            <person name="Maddison M."/>
            <person name="Mclean J."/>
            <person name="Mooney P."/>
            <person name="Moule S."/>
            <person name="Murphy L."/>
            <person name="Oliver K."/>
            <person name="Ormond D."/>
            <person name="Price C."/>
            <person name="Quail M.A."/>
            <person name="Rabbinowitsch E."/>
            <person name="Rajandream M.A."/>
            <person name="Rutter S."/>
            <person name="Rutherford K.M."/>
            <person name="Sanders M."/>
            <person name="Simmonds M."/>
            <person name="Seeger K."/>
            <person name="Sharp S."/>
            <person name="Smith R."/>
            <person name="Squares R."/>
            <person name="Squares S."/>
            <person name="Stevens K."/>
            <person name="Taylor K."/>
            <person name="Tivey A."/>
            <person name="Unwin L."/>
            <person name="Whitehead S."/>
            <person name="Woodward J.R."/>
            <person name="Sulston J.E."/>
            <person name="Craig A."/>
            <person name="Newbold C."/>
            <person name="Barrell B.G."/>
        </authorList>
    </citation>
    <scope>NUCLEOTIDE SEQUENCE [LARGE SCALE GENOMIC DNA]</scope>
    <source>
        <strain evidence="17">3D7</strain>
    </source>
</reference>
<reference evidence="11" key="4">
    <citation type="journal article" date="2009" name="FEBS J.">
        <title>The activity of Plasmodium falciparum arginase is mediated by a novel inter-monomer salt-bridge between Glu295-Arg404.</title>
        <authorList>
            <person name="Wells G.A."/>
            <person name="Mueller I.B."/>
            <person name="Wrenger C."/>
            <person name="Louw A.I."/>
        </authorList>
    </citation>
    <scope>FUNCTION</scope>
    <scope>CATALYTIC ACTIVITY</scope>
    <scope>COFACTOR</scope>
    <scope>SUBUNIT</scope>
    <scope>MUTAGENESIS OF GLU-295 AND ARG-404</scope>
</reference>
<reference evidence="18" key="5">
    <citation type="journal article" date="2010" name="Biochemistry">
        <title>Crystal structure of arginase from Plasmodium falciparum and implications for L-arginine depletion in malarial infection.</title>
        <authorList>
            <person name="Dowling D.P."/>
            <person name="Ilies M."/>
            <person name="Olszewski K.L."/>
            <person name="Portugal S."/>
            <person name="Mota M.M."/>
            <person name="Llinas M."/>
            <person name="Christianson D.W."/>
        </authorList>
    </citation>
    <scope>X-RAY CRYSTALLOGRAPHY (2.14 ANGSTROMS) OF 22-411 IN COMPLEX WITH MANGANESE AND INHIBITOR</scope>
    <scope>FUNCTION</scope>
    <scope>CATALYTIC ACTIVITY</scope>
    <scope>COFACTOR</scope>
    <scope>ACTIVITY REGULATION</scope>
    <scope>BIOPHYSICOCHEMICAL PROPERTIES</scope>
    <scope>PATHWAY</scope>
    <scope>MUTAGENESIS OF HIS-381</scope>
</reference>
<reference evidence="19 20" key="6">
    <citation type="journal article" date="2011" name="J. Med. Chem.">
        <title>Binding of alpha,alpha-disubstituted amino acids to arginase suggests new avenues for inhibitor design.</title>
        <authorList>
            <person name="Ilies M."/>
            <person name="Di Costanzo L."/>
            <person name="Dowling D.P."/>
            <person name="Thorn K.J."/>
            <person name="Christianson D.W."/>
        </authorList>
    </citation>
    <scope>X-RAY CRYSTALLOGRAPHY (1.90 ANGSTROMS) OF 22-411 IN COMPLEX WITH MANGANESE AND INHIBITORS</scope>
    <scope>FUNCTION</scope>
    <scope>CATALYTIC ACTIVITY</scope>
    <scope>COFACTOR</scope>
    <scope>ACTIVITY REGULATION</scope>
</reference>
<dbReference type="EC" id="3.5.3.1" evidence="4 5 6 7"/>
<dbReference type="EMBL" id="AJ313518">
    <property type="protein sequence ID" value="CAC86388.1"/>
    <property type="molecule type" value="Genomic_DNA"/>
</dbReference>
<dbReference type="EMBL" id="AL844508">
    <property type="protein sequence ID" value="CAD51750.1"/>
    <property type="molecule type" value="Genomic_DNA"/>
</dbReference>
<dbReference type="RefSeq" id="XP_001351939.1">
    <property type="nucleotide sequence ID" value="XM_001351903.1"/>
</dbReference>
<dbReference type="PDB" id="3MMR">
    <property type="method" value="X-ray"/>
    <property type="resolution" value="2.14 A"/>
    <property type="chains" value="A=22-411"/>
</dbReference>
<dbReference type="PDB" id="3SL0">
    <property type="method" value="X-ray"/>
    <property type="resolution" value="2.00 A"/>
    <property type="chains" value="A=22-411"/>
</dbReference>
<dbReference type="PDB" id="3SL1">
    <property type="method" value="X-ray"/>
    <property type="resolution" value="1.90 A"/>
    <property type="chains" value="A=22-411"/>
</dbReference>
<dbReference type="PDBsum" id="3MMR"/>
<dbReference type="PDBsum" id="3SL0"/>
<dbReference type="PDBsum" id="3SL1"/>
<dbReference type="SMR" id="Q8I384"/>
<dbReference type="FunCoup" id="Q8I384">
    <property type="interactions" value="30"/>
</dbReference>
<dbReference type="STRING" id="36329.Q8I384"/>
<dbReference type="BindingDB" id="Q8I384"/>
<dbReference type="ChEMBL" id="CHEMBL1795149"/>
<dbReference type="PaxDb" id="5833-PFI0320w"/>
<dbReference type="EnsemblProtists" id="CAD51750">
    <property type="protein sequence ID" value="CAD51750"/>
    <property type="gene ID" value="PF3D7_0906500"/>
</dbReference>
<dbReference type="GeneID" id="813344"/>
<dbReference type="KEGG" id="pfa:PF3D7_0906500"/>
<dbReference type="VEuPathDB" id="PlasmoDB:PF3D7_0906500"/>
<dbReference type="VEuPathDB" id="PlasmoDB:Pf7G8-2_000254600"/>
<dbReference type="VEuPathDB" id="PlasmoDB:Pf7G8_090011400"/>
<dbReference type="VEuPathDB" id="PlasmoDB:PfCD01_090010900"/>
<dbReference type="VEuPathDB" id="PlasmoDB:PfDd2_090011800"/>
<dbReference type="VEuPathDB" id="PlasmoDB:PfGA01_090010900"/>
<dbReference type="VEuPathDB" id="PlasmoDB:PfGB4_090011500"/>
<dbReference type="VEuPathDB" id="PlasmoDB:PfGN01_090011400"/>
<dbReference type="VEuPathDB" id="PlasmoDB:PfHB3_090011200"/>
<dbReference type="VEuPathDB" id="PlasmoDB:PfIT_090011200"/>
<dbReference type="VEuPathDB" id="PlasmoDB:PfKE01_090010900"/>
<dbReference type="VEuPathDB" id="PlasmoDB:PfKH01_090010900"/>
<dbReference type="VEuPathDB" id="PlasmoDB:PfKH02_090011300"/>
<dbReference type="VEuPathDB" id="PlasmoDB:PfML01_090011000"/>
<dbReference type="VEuPathDB" id="PlasmoDB:PfNF135_090010200"/>
<dbReference type="VEuPathDB" id="PlasmoDB:PfNF166_090010600"/>
<dbReference type="VEuPathDB" id="PlasmoDB:PfNF54_090011700"/>
<dbReference type="VEuPathDB" id="PlasmoDB:PfSD01_090011600"/>
<dbReference type="VEuPathDB" id="PlasmoDB:PfSN01_090011200"/>
<dbReference type="VEuPathDB" id="PlasmoDB:PfTG01_090010900"/>
<dbReference type="HOGENOM" id="CLU_039478_6_1_1"/>
<dbReference type="InParanoid" id="Q8I384"/>
<dbReference type="OMA" id="YKEFRYA"/>
<dbReference type="OrthoDB" id="288726at2759"/>
<dbReference type="PhylomeDB" id="Q8I384"/>
<dbReference type="BRENDA" id="3.5.3.1">
    <property type="organism ID" value="11613"/>
</dbReference>
<dbReference type="Reactome" id="R-PFA-6798695">
    <property type="pathway name" value="Neutrophil degranulation"/>
</dbReference>
<dbReference type="Reactome" id="R-PFA-70635">
    <property type="pathway name" value="Urea cycle"/>
</dbReference>
<dbReference type="UniPathway" id="UPA00158">
    <property type="reaction ID" value="UER00270"/>
</dbReference>
<dbReference type="EvolutionaryTrace" id="Q8I384"/>
<dbReference type="Proteomes" id="UP000001450">
    <property type="component" value="Chromosome 9"/>
</dbReference>
<dbReference type="GO" id="GO:0005737">
    <property type="term" value="C:cytoplasm"/>
    <property type="evidence" value="ECO:0000318"/>
    <property type="project" value="GO_Central"/>
</dbReference>
<dbReference type="GO" id="GO:0005829">
    <property type="term" value="C:cytosol"/>
    <property type="evidence" value="ECO:0000318"/>
    <property type="project" value="GO_Central"/>
</dbReference>
<dbReference type="GO" id="GO:0004053">
    <property type="term" value="F:arginase activity"/>
    <property type="evidence" value="ECO:0000314"/>
    <property type="project" value="UniProtKB"/>
</dbReference>
<dbReference type="GO" id="GO:0042802">
    <property type="term" value="F:identical protein binding"/>
    <property type="evidence" value="ECO:0000314"/>
    <property type="project" value="UniProtKB"/>
</dbReference>
<dbReference type="GO" id="GO:0030145">
    <property type="term" value="F:manganese ion binding"/>
    <property type="evidence" value="ECO:0000314"/>
    <property type="project" value="UniProtKB"/>
</dbReference>
<dbReference type="GO" id="GO:0019547">
    <property type="term" value="P:arginine catabolic process to ornithine"/>
    <property type="evidence" value="ECO:0000314"/>
    <property type="project" value="UniProtKB"/>
</dbReference>
<dbReference type="GO" id="GO:0000050">
    <property type="term" value="P:urea cycle"/>
    <property type="evidence" value="ECO:0007669"/>
    <property type="project" value="UniProtKB-UniPathway"/>
</dbReference>
<dbReference type="CDD" id="cd11587">
    <property type="entry name" value="Arginase-like"/>
    <property type="match status" value="1"/>
</dbReference>
<dbReference type="Gene3D" id="3.40.800.10">
    <property type="entry name" value="Ureohydrolase domain"/>
    <property type="match status" value="1"/>
</dbReference>
<dbReference type="InterPro" id="IPR006035">
    <property type="entry name" value="Ureohydrolase"/>
</dbReference>
<dbReference type="InterPro" id="IPR023696">
    <property type="entry name" value="Ureohydrolase_dom_sf"/>
</dbReference>
<dbReference type="PANTHER" id="PTHR43782">
    <property type="entry name" value="ARGINASE"/>
    <property type="match status" value="1"/>
</dbReference>
<dbReference type="PANTHER" id="PTHR43782:SF3">
    <property type="entry name" value="ARGINASE"/>
    <property type="match status" value="1"/>
</dbReference>
<dbReference type="Pfam" id="PF00491">
    <property type="entry name" value="Arginase"/>
    <property type="match status" value="1"/>
</dbReference>
<dbReference type="PIRSF" id="PIRSF036979">
    <property type="entry name" value="Arginase"/>
    <property type="match status" value="1"/>
</dbReference>
<dbReference type="PRINTS" id="PR00116">
    <property type="entry name" value="ARGINASE"/>
</dbReference>
<dbReference type="SUPFAM" id="SSF52768">
    <property type="entry name" value="Arginase/deacetylase"/>
    <property type="match status" value="1"/>
</dbReference>
<dbReference type="PROSITE" id="PS51409">
    <property type="entry name" value="ARGINASE_2"/>
    <property type="match status" value="1"/>
</dbReference>
<organism evidence="17">
    <name type="scientific">Plasmodium falciparum (isolate 3D7)</name>
    <dbReference type="NCBI Taxonomy" id="36329"/>
    <lineage>
        <taxon>Eukaryota</taxon>
        <taxon>Sar</taxon>
        <taxon>Alveolata</taxon>
        <taxon>Apicomplexa</taxon>
        <taxon>Aconoidasida</taxon>
        <taxon>Haemosporida</taxon>
        <taxon>Plasmodiidae</taxon>
        <taxon>Plasmodium</taxon>
        <taxon>Plasmodium (Laverania)</taxon>
    </lineage>
</organism>
<gene>
    <name evidence="9" type="primary">ARG</name>
    <name evidence="16" type="ORF">PF3D7_0906500</name>
</gene>
<name>ARGI_PLAF7</name>
<sequence length="411" mass="46493">MLDTIESYIKSHKEKENLYVKKNVSIIGSPLAAGQPLGGVQLACDDLRKLGLHNVIDVLGWKYEDIGNIDNGDNEMKQEKKTNNYINNNDNNNDNNNDNNNDNNNNCYIPNGVIKEKKHDLSNNKMNGYVNHNFYGNYEENNVISTNDKYKNNCYYDNIRNIKEIGIFSKNLFDTMSNELRKKNFVLNIGGDHGVAFSSILSSLQMYQNLRVIWIDAHGDINIPETSPSGNYHGMTLAHTLGLFKKKVPYFEWSENLTYLKPENTAIIGIRDIDAYEKIILKKCNINYYTIFDIEKNGIYNTICTALEKIDPNSNCPIHISLDIDSVDNVFAPGTGTVAKGGLNYREINLLMKILAETKRVVSMDLVEYNPSLDEVDKKVHGDSLPILDNATKTGKLCLELIARVLGYDIV</sequence>